<evidence type="ECO:0000250" key="1"/>
<evidence type="ECO:0000305" key="2"/>
<organism>
    <name type="scientific">Gossypium barbadense</name>
    <name type="common">Sea Island cotton</name>
    <name type="synonym">Hibiscus barbadensis</name>
    <dbReference type="NCBI Taxonomy" id="3634"/>
    <lineage>
        <taxon>Eukaryota</taxon>
        <taxon>Viridiplantae</taxon>
        <taxon>Streptophyta</taxon>
        <taxon>Embryophyta</taxon>
        <taxon>Tracheophyta</taxon>
        <taxon>Spermatophyta</taxon>
        <taxon>Magnoliopsida</taxon>
        <taxon>eudicotyledons</taxon>
        <taxon>Gunneridae</taxon>
        <taxon>Pentapetalae</taxon>
        <taxon>rosids</taxon>
        <taxon>malvids</taxon>
        <taxon>Malvales</taxon>
        <taxon>Malvaceae</taxon>
        <taxon>Malvoideae</taxon>
        <taxon>Gossypium</taxon>
    </lineage>
</organism>
<reference key="1">
    <citation type="journal article" date="2006" name="Genes Genet. Syst.">
        <title>Complete nucleotide sequence of the cotton (Gossypium barbadense L.) chloroplast genome with a comparative analysis of sequences among 9 dicot plants.</title>
        <authorList>
            <person name="Ibrahim R.I.H."/>
            <person name="Azuma J."/>
            <person name="Sakamoto M."/>
        </authorList>
    </citation>
    <scope>NUCLEOTIDE SEQUENCE [LARGE SCALE GENOMIC DNA]</scope>
</reference>
<sequence>MVKNSFISVIFQEKKEENRGSAEFQIVSFTNKIRRLTSHLELHKKDYLSQRGLRKILGKRQRLLSYLSKTNKIRYKELIGELDIRESKNR</sequence>
<gene>
    <name type="primary">rps15</name>
</gene>
<dbReference type="EMBL" id="AP009123">
    <property type="protein sequence ID" value="BAF41304.1"/>
    <property type="molecule type" value="Genomic_DNA"/>
</dbReference>
<dbReference type="RefSeq" id="YP_913243.1">
    <property type="nucleotide sequence ID" value="NC_008641.1"/>
</dbReference>
<dbReference type="SMR" id="A0ZZ92"/>
<dbReference type="GeneID" id="4575250"/>
<dbReference type="GO" id="GO:0009507">
    <property type="term" value="C:chloroplast"/>
    <property type="evidence" value="ECO:0007669"/>
    <property type="project" value="UniProtKB-SubCell"/>
</dbReference>
<dbReference type="GO" id="GO:1990904">
    <property type="term" value="C:ribonucleoprotein complex"/>
    <property type="evidence" value="ECO:0007669"/>
    <property type="project" value="UniProtKB-KW"/>
</dbReference>
<dbReference type="GO" id="GO:0005840">
    <property type="term" value="C:ribosome"/>
    <property type="evidence" value="ECO:0007669"/>
    <property type="project" value="UniProtKB-KW"/>
</dbReference>
<dbReference type="GO" id="GO:0003735">
    <property type="term" value="F:structural constituent of ribosome"/>
    <property type="evidence" value="ECO:0007669"/>
    <property type="project" value="InterPro"/>
</dbReference>
<dbReference type="GO" id="GO:0006412">
    <property type="term" value="P:translation"/>
    <property type="evidence" value="ECO:0007669"/>
    <property type="project" value="UniProtKB-UniRule"/>
</dbReference>
<dbReference type="CDD" id="cd00353">
    <property type="entry name" value="Ribosomal_S15p_S13e"/>
    <property type="match status" value="1"/>
</dbReference>
<dbReference type="Gene3D" id="1.10.287.10">
    <property type="entry name" value="S15/NS1, RNA-binding"/>
    <property type="match status" value="1"/>
</dbReference>
<dbReference type="HAMAP" id="MF_01343_B">
    <property type="entry name" value="Ribosomal_uS15_B"/>
    <property type="match status" value="1"/>
</dbReference>
<dbReference type="InterPro" id="IPR000589">
    <property type="entry name" value="Ribosomal_uS15"/>
</dbReference>
<dbReference type="InterPro" id="IPR005290">
    <property type="entry name" value="Ribosomal_uS15_bac-type"/>
</dbReference>
<dbReference type="InterPro" id="IPR009068">
    <property type="entry name" value="uS15_NS1_RNA-bd_sf"/>
</dbReference>
<dbReference type="NCBIfam" id="TIGR00952">
    <property type="entry name" value="S15_bact"/>
    <property type="match status" value="1"/>
</dbReference>
<dbReference type="PANTHER" id="PTHR23321">
    <property type="entry name" value="RIBOSOMAL PROTEIN S15, BACTERIAL AND ORGANELLAR"/>
    <property type="match status" value="1"/>
</dbReference>
<dbReference type="PANTHER" id="PTHR23321:SF26">
    <property type="entry name" value="SMALL RIBOSOMAL SUBUNIT PROTEIN US15M"/>
    <property type="match status" value="1"/>
</dbReference>
<dbReference type="Pfam" id="PF00312">
    <property type="entry name" value="Ribosomal_S15"/>
    <property type="match status" value="1"/>
</dbReference>
<dbReference type="SMART" id="SM01387">
    <property type="entry name" value="Ribosomal_S15"/>
    <property type="match status" value="1"/>
</dbReference>
<dbReference type="SUPFAM" id="SSF47060">
    <property type="entry name" value="S15/NS1 RNA-binding domain"/>
    <property type="match status" value="1"/>
</dbReference>
<dbReference type="PROSITE" id="PS00362">
    <property type="entry name" value="RIBOSOMAL_S15"/>
    <property type="match status" value="1"/>
</dbReference>
<keyword id="KW-0150">Chloroplast</keyword>
<keyword id="KW-0934">Plastid</keyword>
<keyword id="KW-0687">Ribonucleoprotein</keyword>
<keyword id="KW-0689">Ribosomal protein</keyword>
<proteinExistence type="inferred from homology"/>
<protein>
    <recommendedName>
        <fullName evidence="2">Small ribosomal subunit protein uS15c</fullName>
    </recommendedName>
    <alternativeName>
        <fullName>30S ribosomal protein S15, chloroplastic</fullName>
    </alternativeName>
</protein>
<comment type="subunit">
    <text evidence="1">Part of the 30S ribosomal subunit.</text>
</comment>
<comment type="subcellular location">
    <subcellularLocation>
        <location>Plastid</location>
        <location>Chloroplast</location>
    </subcellularLocation>
</comment>
<comment type="similarity">
    <text evidence="2">Belongs to the universal ribosomal protein uS15 family.</text>
</comment>
<geneLocation type="chloroplast"/>
<feature type="chain" id="PRO_0000276973" description="Small ribosomal subunit protein uS15c">
    <location>
        <begin position="1"/>
        <end position="90"/>
    </location>
</feature>
<accession>A0ZZ92</accession>
<name>RR15_GOSBA</name>